<sequence>MATLEDKLQELLQPSVEDLGCELWGIECQRSGRFFTVRLYIDKKDGGVTVDDCADVSRQVSAVLDVEDPIADKYNLEVSSPGLNRPLFTLKQFENYIGQDISVHLRVPMFDRRKWQGKLEKIENDMLTLIVDNQPQVLVFGNIQKANVVPKFN</sequence>
<name>RIMP_HISS2</name>
<dbReference type="EMBL" id="CP000947">
    <property type="protein sequence ID" value="ACA31018.1"/>
    <property type="molecule type" value="Genomic_DNA"/>
</dbReference>
<dbReference type="RefSeq" id="WP_012340446.1">
    <property type="nucleotide sequence ID" value="NC_010519.1"/>
</dbReference>
<dbReference type="SMR" id="B0UU11"/>
<dbReference type="STRING" id="228400.HSM_1288"/>
<dbReference type="GeneID" id="31487591"/>
<dbReference type="KEGG" id="hsm:HSM_1288"/>
<dbReference type="HOGENOM" id="CLU_070525_1_1_6"/>
<dbReference type="GO" id="GO:0005829">
    <property type="term" value="C:cytosol"/>
    <property type="evidence" value="ECO:0007669"/>
    <property type="project" value="TreeGrafter"/>
</dbReference>
<dbReference type="GO" id="GO:0000028">
    <property type="term" value="P:ribosomal small subunit assembly"/>
    <property type="evidence" value="ECO:0007669"/>
    <property type="project" value="TreeGrafter"/>
</dbReference>
<dbReference type="GO" id="GO:0006412">
    <property type="term" value="P:translation"/>
    <property type="evidence" value="ECO:0007669"/>
    <property type="project" value="TreeGrafter"/>
</dbReference>
<dbReference type="CDD" id="cd01734">
    <property type="entry name" value="YlxS_C"/>
    <property type="match status" value="1"/>
</dbReference>
<dbReference type="FunFam" id="3.30.300.70:FF:000001">
    <property type="entry name" value="Ribosome maturation factor RimP"/>
    <property type="match status" value="1"/>
</dbReference>
<dbReference type="Gene3D" id="2.30.30.180">
    <property type="entry name" value="Ribosome maturation factor RimP, C-terminal domain"/>
    <property type="match status" value="1"/>
</dbReference>
<dbReference type="Gene3D" id="3.30.300.70">
    <property type="entry name" value="RimP-like superfamily, N-terminal"/>
    <property type="match status" value="1"/>
</dbReference>
<dbReference type="HAMAP" id="MF_01077">
    <property type="entry name" value="RimP"/>
    <property type="match status" value="1"/>
</dbReference>
<dbReference type="InterPro" id="IPR003728">
    <property type="entry name" value="Ribosome_maturation_RimP"/>
</dbReference>
<dbReference type="InterPro" id="IPR028998">
    <property type="entry name" value="RimP_C"/>
</dbReference>
<dbReference type="InterPro" id="IPR036847">
    <property type="entry name" value="RimP_C_sf"/>
</dbReference>
<dbReference type="InterPro" id="IPR028989">
    <property type="entry name" value="RimP_N"/>
</dbReference>
<dbReference type="InterPro" id="IPR035956">
    <property type="entry name" value="RimP_N_sf"/>
</dbReference>
<dbReference type="NCBIfam" id="NF000927">
    <property type="entry name" value="PRK00092.1-1"/>
    <property type="match status" value="1"/>
</dbReference>
<dbReference type="PANTHER" id="PTHR33867">
    <property type="entry name" value="RIBOSOME MATURATION FACTOR RIMP"/>
    <property type="match status" value="1"/>
</dbReference>
<dbReference type="PANTHER" id="PTHR33867:SF1">
    <property type="entry name" value="RIBOSOME MATURATION FACTOR RIMP"/>
    <property type="match status" value="1"/>
</dbReference>
<dbReference type="Pfam" id="PF17384">
    <property type="entry name" value="DUF150_C"/>
    <property type="match status" value="1"/>
</dbReference>
<dbReference type="Pfam" id="PF02576">
    <property type="entry name" value="RimP_N"/>
    <property type="match status" value="1"/>
</dbReference>
<dbReference type="SUPFAM" id="SSF74942">
    <property type="entry name" value="YhbC-like, C-terminal domain"/>
    <property type="match status" value="1"/>
</dbReference>
<dbReference type="SUPFAM" id="SSF75420">
    <property type="entry name" value="YhbC-like, N-terminal domain"/>
    <property type="match status" value="1"/>
</dbReference>
<protein>
    <recommendedName>
        <fullName evidence="1">Ribosome maturation factor RimP</fullName>
    </recommendedName>
</protein>
<comment type="function">
    <text evidence="1">Required for maturation of 30S ribosomal subunits.</text>
</comment>
<comment type="subcellular location">
    <subcellularLocation>
        <location evidence="1">Cytoplasm</location>
    </subcellularLocation>
</comment>
<comment type="similarity">
    <text evidence="1">Belongs to the RimP family.</text>
</comment>
<evidence type="ECO:0000255" key="1">
    <source>
        <dbReference type="HAMAP-Rule" id="MF_01077"/>
    </source>
</evidence>
<proteinExistence type="inferred from homology"/>
<gene>
    <name evidence="1" type="primary">rimP</name>
    <name type="ordered locus">HSM_1288</name>
</gene>
<feature type="chain" id="PRO_1000136769" description="Ribosome maturation factor RimP">
    <location>
        <begin position="1"/>
        <end position="153"/>
    </location>
</feature>
<accession>B0UU11</accession>
<reference key="1">
    <citation type="submission" date="2008-02" db="EMBL/GenBank/DDBJ databases">
        <title>Complete sequence of Haemophilus somnus 2336.</title>
        <authorList>
            <consortium name="US DOE Joint Genome Institute"/>
            <person name="Siddaramappa S."/>
            <person name="Duncan A.J."/>
            <person name="Challacombe J.F."/>
            <person name="Rainey D."/>
            <person name="Gillaspy A.F."/>
            <person name="Carson M."/>
            <person name="Gipson J."/>
            <person name="Gipson M."/>
            <person name="Bruce D."/>
            <person name="Detter J.C."/>
            <person name="Han C.S."/>
            <person name="Land M."/>
            <person name="Tapia R."/>
            <person name="Thompson L.S."/>
            <person name="Orvis J."/>
            <person name="Zaitshik J."/>
            <person name="Barnes G."/>
            <person name="Brettin T.S."/>
            <person name="Dyer D.W."/>
            <person name="Inzana T.J."/>
        </authorList>
    </citation>
    <scope>NUCLEOTIDE SEQUENCE [LARGE SCALE GENOMIC DNA]</scope>
    <source>
        <strain>2336</strain>
    </source>
</reference>
<keyword id="KW-0963">Cytoplasm</keyword>
<keyword id="KW-0690">Ribosome biogenesis</keyword>
<organism>
    <name type="scientific">Histophilus somni (strain 2336)</name>
    <name type="common">Haemophilus somnus</name>
    <dbReference type="NCBI Taxonomy" id="228400"/>
    <lineage>
        <taxon>Bacteria</taxon>
        <taxon>Pseudomonadati</taxon>
        <taxon>Pseudomonadota</taxon>
        <taxon>Gammaproteobacteria</taxon>
        <taxon>Pasteurellales</taxon>
        <taxon>Pasteurellaceae</taxon>
        <taxon>Histophilus</taxon>
    </lineage>
</organism>